<gene>
    <name evidence="7" type="primary">PLDGAMMA3</name>
    <name type="ordered locus">At4g11840</name>
    <name type="ORF">T26M18.50</name>
</gene>
<reference key="1">
    <citation type="journal article" date="1999" name="Nature">
        <title>Sequence and analysis of chromosome 4 of the plant Arabidopsis thaliana.</title>
        <authorList>
            <person name="Mayer K.F.X."/>
            <person name="Schueller C."/>
            <person name="Wambutt R."/>
            <person name="Murphy G."/>
            <person name="Volckaert G."/>
            <person name="Pohl T."/>
            <person name="Duesterhoeft A."/>
            <person name="Stiekema W."/>
            <person name="Entian K.-D."/>
            <person name="Terryn N."/>
            <person name="Harris B."/>
            <person name="Ansorge W."/>
            <person name="Brandt P."/>
            <person name="Grivell L.A."/>
            <person name="Rieger M."/>
            <person name="Weichselgartner M."/>
            <person name="de Simone V."/>
            <person name="Obermaier B."/>
            <person name="Mache R."/>
            <person name="Mueller M."/>
            <person name="Kreis M."/>
            <person name="Delseny M."/>
            <person name="Puigdomenech P."/>
            <person name="Watson M."/>
            <person name="Schmidtheini T."/>
            <person name="Reichert B."/>
            <person name="Portetelle D."/>
            <person name="Perez-Alonso M."/>
            <person name="Boutry M."/>
            <person name="Bancroft I."/>
            <person name="Vos P."/>
            <person name="Hoheisel J."/>
            <person name="Zimmermann W."/>
            <person name="Wedler H."/>
            <person name="Ridley P."/>
            <person name="Langham S.-A."/>
            <person name="McCullagh B."/>
            <person name="Bilham L."/>
            <person name="Robben J."/>
            <person name="van der Schueren J."/>
            <person name="Grymonprez B."/>
            <person name="Chuang Y.-J."/>
            <person name="Vandenbussche F."/>
            <person name="Braeken M."/>
            <person name="Weltjens I."/>
            <person name="Voet M."/>
            <person name="Bastiaens I."/>
            <person name="Aert R."/>
            <person name="Defoor E."/>
            <person name="Weitzenegger T."/>
            <person name="Bothe G."/>
            <person name="Ramsperger U."/>
            <person name="Hilbert H."/>
            <person name="Braun M."/>
            <person name="Holzer E."/>
            <person name="Brandt A."/>
            <person name="Peters S."/>
            <person name="van Staveren M."/>
            <person name="Dirkse W."/>
            <person name="Mooijman P."/>
            <person name="Klein Lankhorst R."/>
            <person name="Rose M."/>
            <person name="Hauf J."/>
            <person name="Koetter P."/>
            <person name="Berneiser S."/>
            <person name="Hempel S."/>
            <person name="Feldpausch M."/>
            <person name="Lamberth S."/>
            <person name="Van den Daele H."/>
            <person name="De Keyser A."/>
            <person name="Buysshaert C."/>
            <person name="Gielen J."/>
            <person name="Villarroel R."/>
            <person name="De Clercq R."/>
            <person name="van Montagu M."/>
            <person name="Rogers J."/>
            <person name="Cronin A."/>
            <person name="Quail M.A."/>
            <person name="Bray-Allen S."/>
            <person name="Clark L."/>
            <person name="Doggett J."/>
            <person name="Hall S."/>
            <person name="Kay M."/>
            <person name="Lennard N."/>
            <person name="McLay K."/>
            <person name="Mayes R."/>
            <person name="Pettett A."/>
            <person name="Rajandream M.A."/>
            <person name="Lyne M."/>
            <person name="Benes V."/>
            <person name="Rechmann S."/>
            <person name="Borkova D."/>
            <person name="Bloecker H."/>
            <person name="Scharfe M."/>
            <person name="Grimm M."/>
            <person name="Loehnert T.-H."/>
            <person name="Dose S."/>
            <person name="de Haan M."/>
            <person name="Maarse A.C."/>
            <person name="Schaefer M."/>
            <person name="Mueller-Auer S."/>
            <person name="Gabel C."/>
            <person name="Fuchs M."/>
            <person name="Fartmann B."/>
            <person name="Granderath K."/>
            <person name="Dauner D."/>
            <person name="Herzl A."/>
            <person name="Neumann S."/>
            <person name="Argiriou A."/>
            <person name="Vitale D."/>
            <person name="Liguori R."/>
            <person name="Piravandi E."/>
            <person name="Massenet O."/>
            <person name="Quigley F."/>
            <person name="Clabauld G."/>
            <person name="Muendlein A."/>
            <person name="Felber R."/>
            <person name="Schnabl S."/>
            <person name="Hiller R."/>
            <person name="Schmidt W."/>
            <person name="Lecharny A."/>
            <person name="Aubourg S."/>
            <person name="Chefdor F."/>
            <person name="Cooke R."/>
            <person name="Berger C."/>
            <person name="Monfort A."/>
            <person name="Casacuberta E."/>
            <person name="Gibbons T."/>
            <person name="Weber N."/>
            <person name="Vandenbol M."/>
            <person name="Bargues M."/>
            <person name="Terol J."/>
            <person name="Torres A."/>
            <person name="Perez-Perez A."/>
            <person name="Purnelle B."/>
            <person name="Bent E."/>
            <person name="Johnson S."/>
            <person name="Tacon D."/>
            <person name="Jesse T."/>
            <person name="Heijnen L."/>
            <person name="Schwarz S."/>
            <person name="Scholler P."/>
            <person name="Heber S."/>
            <person name="Francs P."/>
            <person name="Bielke C."/>
            <person name="Frishman D."/>
            <person name="Haase D."/>
            <person name="Lemcke K."/>
            <person name="Mewes H.-W."/>
            <person name="Stocker S."/>
            <person name="Zaccaria P."/>
            <person name="Bevan M."/>
            <person name="Wilson R.K."/>
            <person name="de la Bastide M."/>
            <person name="Habermann K."/>
            <person name="Parnell L."/>
            <person name="Dedhia N."/>
            <person name="Gnoj L."/>
            <person name="Schutz K."/>
            <person name="Huang E."/>
            <person name="Spiegel L."/>
            <person name="Sekhon M."/>
            <person name="Murray J."/>
            <person name="Sheet P."/>
            <person name="Cordes M."/>
            <person name="Abu-Threideh J."/>
            <person name="Stoneking T."/>
            <person name="Kalicki J."/>
            <person name="Graves T."/>
            <person name="Harmon G."/>
            <person name="Edwards J."/>
            <person name="Latreille P."/>
            <person name="Courtney L."/>
            <person name="Cloud J."/>
            <person name="Abbott A."/>
            <person name="Scott K."/>
            <person name="Johnson D."/>
            <person name="Minx P."/>
            <person name="Bentley D."/>
            <person name="Fulton B."/>
            <person name="Miller N."/>
            <person name="Greco T."/>
            <person name="Kemp K."/>
            <person name="Kramer J."/>
            <person name="Fulton L."/>
            <person name="Mardis E."/>
            <person name="Dante M."/>
            <person name="Pepin K."/>
            <person name="Hillier L.W."/>
            <person name="Nelson J."/>
            <person name="Spieth J."/>
            <person name="Ryan E."/>
            <person name="Andrews S."/>
            <person name="Geisel C."/>
            <person name="Layman D."/>
            <person name="Du H."/>
            <person name="Ali J."/>
            <person name="Berghoff A."/>
            <person name="Jones K."/>
            <person name="Drone K."/>
            <person name="Cotton M."/>
            <person name="Joshu C."/>
            <person name="Antonoiu B."/>
            <person name="Zidanic M."/>
            <person name="Strong C."/>
            <person name="Sun H."/>
            <person name="Lamar B."/>
            <person name="Yordan C."/>
            <person name="Ma P."/>
            <person name="Zhong J."/>
            <person name="Preston R."/>
            <person name="Vil D."/>
            <person name="Shekher M."/>
            <person name="Matero A."/>
            <person name="Shah R."/>
            <person name="Swaby I.K."/>
            <person name="O'Shaughnessy A."/>
            <person name="Rodriguez M."/>
            <person name="Hoffman J."/>
            <person name="Till S."/>
            <person name="Granat S."/>
            <person name="Shohdy N."/>
            <person name="Hasegawa A."/>
            <person name="Hameed A."/>
            <person name="Lodhi M."/>
            <person name="Johnson A."/>
            <person name="Chen E."/>
            <person name="Marra M.A."/>
            <person name="Martienssen R."/>
            <person name="McCombie W.R."/>
        </authorList>
    </citation>
    <scope>NUCLEOTIDE SEQUENCE [LARGE SCALE GENOMIC DNA]</scope>
    <source>
        <strain>cv. Columbia</strain>
    </source>
</reference>
<reference key="2">
    <citation type="journal article" date="2017" name="Plant J.">
        <title>Araport11: a complete reannotation of the Arabidopsis thaliana reference genome.</title>
        <authorList>
            <person name="Cheng C.Y."/>
            <person name="Krishnakumar V."/>
            <person name="Chan A.P."/>
            <person name="Thibaud-Nissen F."/>
            <person name="Schobel S."/>
            <person name="Town C.D."/>
        </authorList>
    </citation>
    <scope>GENOME REANNOTATION</scope>
    <source>
        <strain>cv. Columbia</strain>
    </source>
</reference>
<reference key="3">
    <citation type="journal article" date="1999" name="Plant Physiol.">
        <title>Subcellular distribution and tissue expression of phospholipase Dalpha, Dbeta, and Dgamma in Arabidopsis.</title>
        <authorList>
            <person name="Fan L."/>
            <person name="Zheng S."/>
            <person name="Cui D."/>
            <person name="Wang X."/>
        </authorList>
    </citation>
    <scope>SUBCELLULAR LOCATION</scope>
</reference>
<reference key="4">
    <citation type="journal article" date="2002" name="Plant Physiol.">
        <title>The Arabidopsis phospholipase D family. Characterization of a calcium-independent and phosphatidylcholine-selective PLD zeta 1 with distinct regulatory domains.</title>
        <authorList>
            <person name="Qin C."/>
            <person name="Wang X."/>
        </authorList>
    </citation>
    <scope>GENE FAMILY</scope>
    <scope>NOMENCLATURE</scope>
</reference>
<reference key="5">
    <citation type="journal article" date="2006" name="Biochim. Biophys. Acta">
        <title>Expression and characterization of Arabidopsis phospholipase Dgamma2.</title>
        <authorList>
            <person name="Qin C."/>
            <person name="Li M."/>
            <person name="Qin W."/>
            <person name="Bahn S.C."/>
            <person name="Wang C."/>
            <person name="Wang X."/>
        </authorList>
    </citation>
    <scope>TISSUE SPECIFICITY</scope>
</reference>
<reference key="6">
    <citation type="journal article" date="2009" name="J. Proteomics">
        <title>Phosphoproteomic analysis of nuclei-enriched fractions from Arabidopsis thaliana.</title>
        <authorList>
            <person name="Jones A.M.E."/>
            <person name="MacLean D."/>
            <person name="Studholme D.J."/>
            <person name="Serna-Sanz A."/>
            <person name="Andreasson E."/>
            <person name="Rathjen J.P."/>
            <person name="Peck S.C."/>
        </authorList>
    </citation>
    <scope>IDENTIFICATION BY MASS SPECTROMETRY [LARGE SCALE ANALYSIS]</scope>
    <source>
        <strain>cv. Columbia</strain>
    </source>
</reference>
<dbReference type="EC" id="3.1.4.4" evidence="2"/>
<dbReference type="EMBL" id="AL078606">
    <property type="protein sequence ID" value="CAB44322.1"/>
    <property type="molecule type" value="Genomic_DNA"/>
</dbReference>
<dbReference type="EMBL" id="AL161532">
    <property type="protein sequence ID" value="CAB78227.1"/>
    <property type="molecule type" value="Genomic_DNA"/>
</dbReference>
<dbReference type="EMBL" id="CP002687">
    <property type="protein sequence ID" value="AEE83056.1"/>
    <property type="molecule type" value="Genomic_DNA"/>
</dbReference>
<dbReference type="PIR" id="T09343">
    <property type="entry name" value="T09343"/>
</dbReference>
<dbReference type="RefSeq" id="NP_192921.1">
    <property type="nucleotide sequence ID" value="NM_117254.3"/>
</dbReference>
<dbReference type="SMR" id="Q9T052"/>
<dbReference type="BioGRID" id="12088">
    <property type="interactions" value="3"/>
</dbReference>
<dbReference type="FunCoup" id="Q9T052">
    <property type="interactions" value="156"/>
</dbReference>
<dbReference type="IntAct" id="Q9T052">
    <property type="interactions" value="3"/>
</dbReference>
<dbReference type="STRING" id="3702.Q9T052"/>
<dbReference type="iPTMnet" id="Q9T052"/>
<dbReference type="PaxDb" id="3702-AT4G11840.1"/>
<dbReference type="ProteomicsDB" id="234965"/>
<dbReference type="EnsemblPlants" id="AT4G11840.1">
    <property type="protein sequence ID" value="AT4G11840.1"/>
    <property type="gene ID" value="AT4G11840"/>
</dbReference>
<dbReference type="GeneID" id="826790"/>
<dbReference type="Gramene" id="AT4G11840.1">
    <property type="protein sequence ID" value="AT4G11840.1"/>
    <property type="gene ID" value="AT4G11840"/>
</dbReference>
<dbReference type="KEGG" id="ath:AT4G11840"/>
<dbReference type="Araport" id="AT4G11840"/>
<dbReference type="TAIR" id="AT4G11840">
    <property type="gene designation" value="PLDGAMMA3"/>
</dbReference>
<dbReference type="eggNOG" id="KOG1329">
    <property type="taxonomic scope" value="Eukaryota"/>
</dbReference>
<dbReference type="HOGENOM" id="CLU_004684_0_0_1"/>
<dbReference type="InParanoid" id="Q9T052"/>
<dbReference type="PhylomeDB" id="Q9T052"/>
<dbReference type="BioCyc" id="ARA:AT4G11840-MONOMER"/>
<dbReference type="PRO" id="PR:Q9T052"/>
<dbReference type="Proteomes" id="UP000006548">
    <property type="component" value="Chromosome 4"/>
</dbReference>
<dbReference type="ExpressionAtlas" id="Q9T052">
    <property type="expression patterns" value="baseline and differential"/>
</dbReference>
<dbReference type="GO" id="GO:0005737">
    <property type="term" value="C:cytoplasm"/>
    <property type="evidence" value="ECO:0007669"/>
    <property type="project" value="UniProtKB-SubCell"/>
</dbReference>
<dbReference type="GO" id="GO:0016020">
    <property type="term" value="C:membrane"/>
    <property type="evidence" value="ECO:0007669"/>
    <property type="project" value="UniProtKB-SubCell"/>
</dbReference>
<dbReference type="GO" id="GO:0005509">
    <property type="term" value="F:calcium ion binding"/>
    <property type="evidence" value="ECO:0007669"/>
    <property type="project" value="InterPro"/>
</dbReference>
<dbReference type="GO" id="GO:0004630">
    <property type="term" value="F:phospholipase D activity"/>
    <property type="evidence" value="ECO:0007669"/>
    <property type="project" value="UniProtKB-EC"/>
</dbReference>
<dbReference type="GO" id="GO:0016042">
    <property type="term" value="P:lipid catabolic process"/>
    <property type="evidence" value="ECO:0007669"/>
    <property type="project" value="UniProtKB-KW"/>
</dbReference>
<dbReference type="GO" id="GO:0046470">
    <property type="term" value="P:phosphatidylcholine metabolic process"/>
    <property type="evidence" value="ECO:0007669"/>
    <property type="project" value="InterPro"/>
</dbReference>
<dbReference type="CDD" id="cd04015">
    <property type="entry name" value="C2_plant_PLD"/>
    <property type="match status" value="1"/>
</dbReference>
<dbReference type="FunFam" id="3.30.870.10:FF:000027">
    <property type="entry name" value="Phospholipase D"/>
    <property type="match status" value="1"/>
</dbReference>
<dbReference type="FunFam" id="2.60.40.150:FF:000193">
    <property type="entry name" value="Phospholipase D delta"/>
    <property type="match status" value="1"/>
</dbReference>
<dbReference type="FunFam" id="3.30.870.10:FF:000025">
    <property type="entry name" value="Phospholipase D delta"/>
    <property type="match status" value="1"/>
</dbReference>
<dbReference type="Gene3D" id="2.60.40.150">
    <property type="entry name" value="C2 domain"/>
    <property type="match status" value="1"/>
</dbReference>
<dbReference type="Gene3D" id="3.30.870.10">
    <property type="entry name" value="Endonuclease Chain A"/>
    <property type="match status" value="2"/>
</dbReference>
<dbReference type="InterPro" id="IPR000008">
    <property type="entry name" value="C2_dom"/>
</dbReference>
<dbReference type="InterPro" id="IPR035892">
    <property type="entry name" value="C2_domain_sf"/>
</dbReference>
<dbReference type="InterPro" id="IPR001736">
    <property type="entry name" value="PLipase_D/transphosphatidylase"/>
</dbReference>
<dbReference type="InterPro" id="IPR024632">
    <property type="entry name" value="PLipase_D_C"/>
</dbReference>
<dbReference type="InterPro" id="IPR015679">
    <property type="entry name" value="PLipase_D_fam"/>
</dbReference>
<dbReference type="InterPro" id="IPR011402">
    <property type="entry name" value="PLipase_D_pln"/>
</dbReference>
<dbReference type="PANTHER" id="PTHR18896">
    <property type="entry name" value="PHOSPHOLIPASE D"/>
    <property type="match status" value="1"/>
</dbReference>
<dbReference type="PANTHER" id="PTHR18896:SF130">
    <property type="entry name" value="PHOSPHOLIPASE D GAMMA 2-RELATED"/>
    <property type="match status" value="1"/>
</dbReference>
<dbReference type="Pfam" id="PF00168">
    <property type="entry name" value="C2"/>
    <property type="match status" value="1"/>
</dbReference>
<dbReference type="Pfam" id="PF12357">
    <property type="entry name" value="PLD_C"/>
    <property type="match status" value="1"/>
</dbReference>
<dbReference type="Pfam" id="PF00614">
    <property type="entry name" value="PLDc"/>
    <property type="match status" value="2"/>
</dbReference>
<dbReference type="PIRSF" id="PIRSF036470">
    <property type="entry name" value="PLD_plant"/>
    <property type="match status" value="1"/>
</dbReference>
<dbReference type="SMART" id="SM00239">
    <property type="entry name" value="C2"/>
    <property type="match status" value="1"/>
</dbReference>
<dbReference type="SMART" id="SM00155">
    <property type="entry name" value="PLDc"/>
    <property type="match status" value="2"/>
</dbReference>
<dbReference type="SUPFAM" id="SSF49562">
    <property type="entry name" value="C2 domain (Calcium/lipid-binding domain, CaLB)"/>
    <property type="match status" value="1"/>
</dbReference>
<dbReference type="SUPFAM" id="SSF56024">
    <property type="entry name" value="Phospholipase D/nuclease"/>
    <property type="match status" value="2"/>
</dbReference>
<dbReference type="PROSITE" id="PS50004">
    <property type="entry name" value="C2"/>
    <property type="match status" value="1"/>
</dbReference>
<dbReference type="PROSITE" id="PS50035">
    <property type="entry name" value="PLD"/>
    <property type="match status" value="2"/>
</dbReference>
<keyword id="KW-0106">Calcium</keyword>
<keyword id="KW-0963">Cytoplasm</keyword>
<keyword id="KW-0378">Hydrolase</keyword>
<keyword id="KW-0442">Lipid degradation</keyword>
<keyword id="KW-0443">Lipid metabolism</keyword>
<keyword id="KW-0472">Membrane</keyword>
<keyword id="KW-0479">Metal-binding</keyword>
<keyword id="KW-0597">Phosphoprotein</keyword>
<keyword id="KW-1185">Reference proteome</keyword>
<keyword id="KW-0677">Repeat</keyword>
<comment type="function">
    <text evidence="2">Hydrolyzes glycerol-phospholipids at the terminal phosphodiesteric bond to generate phosphatidic acids (PA). Plays an important role in various cellular processes, including phytohormone action, vesicular trafficking, secretion, cytoskeletal arrangement, meiosis, tumor promotion, pathogenesis, membrane deterioration and senescence. Can use phosphatidylserine but prefers ethanolamine-containing lipids as substrates.</text>
</comment>
<comment type="catalytic activity">
    <reaction evidence="2">
        <text>a 1,2-diacyl-sn-glycero-3-phosphocholine + H2O = a 1,2-diacyl-sn-glycero-3-phosphate + choline + H(+)</text>
        <dbReference type="Rhea" id="RHEA:14445"/>
        <dbReference type="ChEBI" id="CHEBI:15354"/>
        <dbReference type="ChEBI" id="CHEBI:15377"/>
        <dbReference type="ChEBI" id="CHEBI:15378"/>
        <dbReference type="ChEBI" id="CHEBI:57643"/>
        <dbReference type="ChEBI" id="CHEBI:58608"/>
        <dbReference type="EC" id="3.1.4.4"/>
    </reaction>
</comment>
<comment type="cofactor">
    <cofactor evidence="2">
        <name>Ca(2+)</name>
        <dbReference type="ChEBI" id="CHEBI:29108"/>
    </cofactor>
    <text evidence="2">Ca(2+). Requires micromolar level (PIP2-dependent).</text>
</comment>
<comment type="activity regulation">
    <text>Inhibited by neomycin.</text>
</comment>
<comment type="subcellular location">
    <subcellularLocation>
        <location evidence="5">Cytoplasm</location>
    </subcellularLocation>
    <subcellularLocation>
        <location evidence="5">Membrane</location>
        <topology evidence="5">Peripheral membrane protein</topology>
    </subcellularLocation>
    <text>Found mainly associated with intracellular membranes but also with mitochondrial membranes, nuclei and clathrin-coated vesicles. Not found in chloroplast.</text>
</comment>
<comment type="tissue specificity">
    <text evidence="6">Highly expressed in inflorescences and old leaves, moderately in stems, roots, siliques and young leaves and low in flowers.</text>
</comment>
<comment type="induction">
    <text>Activated by wounding, heavy metal, methyl salicylate, osmotic and salt stresses.</text>
</comment>
<comment type="domain">
    <text evidence="8">C2 domain is a calcium-binding fold, and the binding promotes the protein association with membranes. In PLD gamma, all the calcium-coordinating acidic amino acids are conserved.</text>
</comment>
<comment type="miscellaneous">
    <text>Presence of a putative myristoylation site MGXXXS (Gly-14).</text>
</comment>
<comment type="similarity">
    <text evidence="8">Belongs to the phospholipase D family. C2-PLD subfamily.</text>
</comment>
<comment type="caution">
    <text evidence="8">It is uncertain whether the sequence from 46 to 76 is encoded by an intron as for PLDGAMMA2.</text>
</comment>
<comment type="caution">
    <text evidence="8">It is uncertain whether Met-1 or Met-11 is the initiator.</text>
</comment>
<evidence type="ECO:0000250" key="1">
    <source>
        <dbReference type="UniProtKB" id="Q38882"/>
    </source>
</evidence>
<evidence type="ECO:0000250" key="2">
    <source>
        <dbReference type="UniProtKB" id="Q9T053"/>
    </source>
</evidence>
<evidence type="ECO:0000255" key="3">
    <source>
        <dbReference type="PROSITE-ProRule" id="PRU00041"/>
    </source>
</evidence>
<evidence type="ECO:0000255" key="4">
    <source>
        <dbReference type="PROSITE-ProRule" id="PRU00153"/>
    </source>
</evidence>
<evidence type="ECO:0000269" key="5">
    <source>
    </source>
</evidence>
<evidence type="ECO:0000269" key="6">
    <source>
    </source>
</evidence>
<evidence type="ECO:0000303" key="7">
    <source>
    </source>
</evidence>
<evidence type="ECO:0000305" key="8"/>
<organism>
    <name type="scientific">Arabidopsis thaliana</name>
    <name type="common">Mouse-ear cress</name>
    <dbReference type="NCBI Taxonomy" id="3702"/>
    <lineage>
        <taxon>Eukaryota</taxon>
        <taxon>Viridiplantae</taxon>
        <taxon>Streptophyta</taxon>
        <taxon>Embryophyta</taxon>
        <taxon>Tracheophyta</taxon>
        <taxon>Spermatophyta</taxon>
        <taxon>Magnoliopsida</taxon>
        <taxon>eudicotyledons</taxon>
        <taxon>Gunneridae</taxon>
        <taxon>Pentapetalae</taxon>
        <taxon>rosids</taxon>
        <taxon>malvids</taxon>
        <taxon>Brassicales</taxon>
        <taxon>Brassicaceae</taxon>
        <taxon>Camelineae</taxon>
        <taxon>Arabidopsis</taxon>
    </lineage>
</organism>
<accession>Q9T052</accession>
<accession>Q9XH77</accession>
<name>PLDG3_ARATH</name>
<sequence length="866" mass="97482">MAYHPVYNETMSMGGGSSNEFGQWLDKQLVPFDTSSGSLRVELLHGNLDIWVKEAKHLPNMDGFHNTLVGGMFFGLGRRNHKVDGENSSKITSDPYVTVSISGAVIGRTFVISNSENPVWMQHFDVPVAHSAAKVHFVVKDSDIIGSQIIGAVEIPTEQLCSGNRIEGLFPILNSRGKPCKQGAVLSLSIQYIPMERMRLYQKGVGFGVECVGVPGTYFPLRKGGRVTLYQDAHVDDGTLPSVHLDGGIQYRHGKCWEDMADAIRRARRLIYITGWSVFHPVRLVRRNNDPTQGTLGELLKVKSQEGVRVLVLVWDDPTSRSLLGFSTKGLMNTSDEETRRFFKHSSVQVLLCPRYGGKGHSFIKKSEVETIYTHHQKTMIVDAEAAQNRRKIVAFVGGLDLCNGRFDTPKHPLFRTLKTIHKDDFHNPNFVTTADDGPREPWHDLHSKIDGPAAYDVLANFEERWMKASKPRGIGRLRTSSDDSLLRLDRIPDIMGLSEASSANDNDPESWHVQVFRSIDSSSVKGFPKDPKEATGRNLLCGKNILIDMSIHAAYVKAIRSAQHFIYIENQYFLGSSFNWDSNKNLGANNLIPMEIALKIANKIRAREKFAAYIVIPMWPEGAPTSNPIQRILYWQHKTMQMMYQTIYKALVEVGLDGQLEPQDFLNFFCLGTREVGTREVPDGTVSVYNSPRKPPQLNAAQVQALKSRRFMIYVHSKGMVVDDEFVLIGSANINQRSLEGTRDTEIAMGGYQPHHSWAKKGSRPRGQIFGYRMSLWAEHLGFLEQEFEEPENMECVRRVRQLSELNWRQYAAEEVTEMPGHLLKYPVQVDRTGKVSSLPGYETFPDLGGKIIGSFLVVEENLTI</sequence>
<feature type="chain" id="PRO_0000218814" description="Phospholipase D gamma 3">
    <location>
        <begin position="1"/>
        <end position="866"/>
    </location>
</feature>
<feature type="domain" description="C2" evidence="3">
    <location>
        <begin position="31"/>
        <end position="170"/>
    </location>
</feature>
<feature type="domain" description="PLD phosphodiesterase 1" evidence="4">
    <location>
        <begin position="371"/>
        <end position="406"/>
    </location>
</feature>
<feature type="domain" description="PLD phosphodiesterase 2" evidence="4">
    <location>
        <begin position="712"/>
        <end position="739"/>
    </location>
</feature>
<feature type="active site" evidence="4">
    <location>
        <position position="376"/>
    </location>
</feature>
<feature type="active site" evidence="4">
    <location>
        <position position="378"/>
    </location>
</feature>
<feature type="active site" evidence="4">
    <location>
        <position position="383"/>
    </location>
</feature>
<feature type="active site" evidence="4">
    <location>
        <position position="717"/>
    </location>
</feature>
<feature type="active site" evidence="4">
    <location>
        <position position="719"/>
    </location>
</feature>
<feature type="active site" evidence="4">
    <location>
        <position position="724"/>
    </location>
</feature>
<feature type="binding site" evidence="1">
    <location>
        <position position="232"/>
    </location>
    <ligand>
        <name>Ca(2+)</name>
        <dbReference type="ChEBI" id="CHEBI:29108"/>
    </ligand>
</feature>
<feature type="binding site" evidence="1">
    <location>
        <position position="376"/>
    </location>
    <ligand>
        <name>a 1,2-diacyl-sn-glycero-3-phosphate</name>
        <dbReference type="ChEBI" id="CHEBI:58608"/>
    </ligand>
</feature>
<feature type="binding site" evidence="1">
    <location>
        <position position="412"/>
    </location>
    <ligand>
        <name>Ca(2+)</name>
        <dbReference type="ChEBI" id="CHEBI:29108"/>
    </ligand>
</feature>
<feature type="binding site" evidence="1">
    <location>
        <position position="444"/>
    </location>
    <ligand>
        <name>Ca(2+)</name>
        <dbReference type="ChEBI" id="CHEBI:29108"/>
    </ligand>
</feature>
<feature type="binding site" evidence="1">
    <location>
        <position position="572"/>
    </location>
    <ligand>
        <name>a 1,2-diacyl-sn-glycero-3-phosphate</name>
        <dbReference type="ChEBI" id="CHEBI:58608"/>
    </ligand>
</feature>
<feature type="binding site" evidence="1">
    <location>
        <position position="717"/>
    </location>
    <ligand>
        <name>a 1,2-diacyl-sn-glycero-3-phosphate</name>
        <dbReference type="ChEBI" id="CHEBI:58608"/>
    </ligand>
</feature>
<feature type="binding site" evidence="1">
    <location>
        <position position="780"/>
    </location>
    <ligand>
        <name>Ca(2+)</name>
        <dbReference type="ChEBI" id="CHEBI:29108"/>
    </ligand>
</feature>
<feature type="modified residue" description="Phosphoserine" evidence="2">
    <location>
        <position position="692"/>
    </location>
</feature>
<proteinExistence type="evidence at protein level"/>
<protein>
    <recommendedName>
        <fullName evidence="7">Phospholipase D gamma 3</fullName>
        <shortName evidence="7">AtPLDgamma3</shortName>
        <shortName evidence="7">PLD gamma 3</shortName>
        <ecNumber evidence="2">3.1.4.4</ecNumber>
    </recommendedName>
</protein>